<reference key="1">
    <citation type="journal article" date="1989" name="Nucleic Acids Res.">
        <title>Nucleotide sequence of the cytochrome oxidase subunit I gene from rice mitochondria.</title>
        <authorList>
            <person name="Kadowaki K."/>
            <person name="Suzuki T."/>
            <person name="Kazama S."/>
            <person name="Oh-Fuchi T."/>
            <person name="Sakamoto W."/>
        </authorList>
    </citation>
    <scope>NUCLEOTIDE SEQUENCE [GENOMIC DNA]</scope>
</reference>
<reference key="2">
    <citation type="journal article" date="2002" name="Mol. Genet. Genomics">
        <title>The complete sequence of the rice (Oryza sativa L.) mitochondrial genome: frequent DNA sequence acquisition and loss during the evolution of flowering plants.</title>
        <authorList>
            <person name="Notsu Y."/>
            <person name="Masood S."/>
            <person name="Nishikawa T."/>
            <person name="Kubo N."/>
            <person name="Akiduki G."/>
            <person name="Nakazono M."/>
            <person name="Hirai A."/>
            <person name="Kadowaki K."/>
        </authorList>
    </citation>
    <scope>NUCLEOTIDE SEQUENCE [LARGE SCALE GENOMIC DNA]</scope>
    <source>
        <strain>cv. Nipponbare</strain>
    </source>
</reference>
<reference key="3">
    <citation type="journal article" date="1991" name="Curr. Genet.">
        <title>The rice mitochondrial nad3 gene has an extended reading frame at its 5' end: nucleotide sequence analysis of rice trnS, nad3, and rps12 genes.</title>
        <authorList>
            <person name="Suzuki T."/>
            <person name="Kazama S."/>
            <person name="Hirai A."/>
            <person name="Akihama T."/>
            <person name="Kadowaki K."/>
        </authorList>
    </citation>
    <scope>NUCLEOTIDE SEQUENCE [GENOMIC DNA] OF 1-57</scope>
    <source>
        <strain>cv. Taichung 65</strain>
        <tissue>Shoot</tissue>
    </source>
</reference>
<evidence type="ECO:0000250" key="1">
    <source>
        <dbReference type="UniProtKB" id="P00396"/>
    </source>
</evidence>
<evidence type="ECO:0000250" key="2">
    <source>
        <dbReference type="UniProtKB" id="P00401"/>
    </source>
</evidence>
<evidence type="ECO:0000255" key="3"/>
<evidence type="ECO:0000305" key="4"/>
<feature type="chain" id="PRO_0000183375" description="Cytochrome c oxidase subunit 1">
    <location>
        <begin position="1"/>
        <end position="524"/>
    </location>
</feature>
<feature type="transmembrane region" description="Helical" evidence="3">
    <location>
        <begin position="18"/>
        <end position="38"/>
    </location>
</feature>
<feature type="transmembrane region" description="Helical" evidence="3">
    <location>
        <begin position="66"/>
        <end position="86"/>
    </location>
</feature>
<feature type="transmembrane region" description="Helical" evidence="3">
    <location>
        <begin position="103"/>
        <end position="123"/>
    </location>
</feature>
<feature type="transmembrane region" description="Helical" evidence="3">
    <location>
        <begin position="148"/>
        <end position="168"/>
    </location>
</feature>
<feature type="transmembrane region" description="Helical" evidence="3">
    <location>
        <begin position="186"/>
        <end position="206"/>
    </location>
</feature>
<feature type="transmembrane region" description="Helical" evidence="3">
    <location>
        <begin position="237"/>
        <end position="257"/>
    </location>
</feature>
<feature type="transmembrane region" description="Helical" evidence="3">
    <location>
        <begin position="269"/>
        <end position="289"/>
    </location>
</feature>
<feature type="transmembrane region" description="Helical" evidence="3">
    <location>
        <begin position="312"/>
        <end position="332"/>
    </location>
</feature>
<feature type="transmembrane region" description="Helical" evidence="3">
    <location>
        <begin position="340"/>
        <end position="360"/>
    </location>
</feature>
<feature type="transmembrane region" description="Helical" evidence="3">
    <location>
        <begin position="379"/>
        <end position="399"/>
    </location>
</feature>
<feature type="transmembrane region" description="Helical" evidence="3">
    <location>
        <begin position="414"/>
        <end position="434"/>
    </location>
</feature>
<feature type="transmembrane region" description="Helical" evidence="3">
    <location>
        <begin position="447"/>
        <end position="467"/>
    </location>
</feature>
<feature type="binding site" evidence="2">
    <location>
        <position position="41"/>
    </location>
    <ligand>
        <name>Ca(2+)</name>
        <dbReference type="ChEBI" id="CHEBI:29108"/>
    </ligand>
</feature>
<feature type="binding site" evidence="2">
    <location>
        <position position="46"/>
    </location>
    <ligand>
        <name>Ca(2+)</name>
        <dbReference type="ChEBI" id="CHEBI:29108"/>
    </ligand>
</feature>
<feature type="binding site" description="axial binding residue" evidence="2">
    <location>
        <position position="64"/>
    </location>
    <ligand>
        <name>Fe(II)-heme a</name>
        <dbReference type="ChEBI" id="CHEBI:61715"/>
        <note>low-spin</note>
    </ligand>
    <ligandPart>
        <name>Fe</name>
        <dbReference type="ChEBI" id="CHEBI:18248"/>
    </ligandPart>
</feature>
<feature type="binding site" evidence="2">
    <location>
        <position position="243"/>
    </location>
    <ligand>
        <name>Cu cation</name>
        <dbReference type="ChEBI" id="CHEBI:23378"/>
        <label>B</label>
    </ligand>
</feature>
<feature type="binding site" evidence="1">
    <location>
        <position position="247"/>
    </location>
    <ligand>
        <name>O2</name>
        <dbReference type="ChEBI" id="CHEBI:15379"/>
    </ligand>
</feature>
<feature type="binding site" evidence="2">
    <location>
        <position position="292"/>
    </location>
    <ligand>
        <name>Cu cation</name>
        <dbReference type="ChEBI" id="CHEBI:23378"/>
        <label>B</label>
    </ligand>
</feature>
<feature type="binding site" evidence="2">
    <location>
        <position position="293"/>
    </location>
    <ligand>
        <name>Cu cation</name>
        <dbReference type="ChEBI" id="CHEBI:23378"/>
        <label>B</label>
    </ligand>
</feature>
<feature type="binding site" evidence="2">
    <location>
        <position position="370"/>
    </location>
    <ligand>
        <name>Mg(2+)</name>
        <dbReference type="ChEBI" id="CHEBI:18420"/>
        <note>ligand shared with subunit 2</note>
    </ligand>
</feature>
<feature type="binding site" evidence="2">
    <location>
        <position position="371"/>
    </location>
    <ligand>
        <name>Mg(2+)</name>
        <dbReference type="ChEBI" id="CHEBI:18420"/>
        <note>ligand shared with subunit 2</note>
    </ligand>
</feature>
<feature type="binding site" description="axial binding residue" evidence="2">
    <location>
        <position position="378"/>
    </location>
    <ligand>
        <name>heme a3</name>
        <dbReference type="ChEBI" id="CHEBI:83282"/>
        <note>high-spin</note>
    </ligand>
    <ligandPart>
        <name>Fe</name>
        <dbReference type="ChEBI" id="CHEBI:18248"/>
    </ligandPart>
</feature>
<feature type="binding site" description="axial binding residue" evidence="2">
    <location>
        <position position="380"/>
    </location>
    <ligand>
        <name>Fe(II)-heme a</name>
        <dbReference type="ChEBI" id="CHEBI:61715"/>
        <note>low-spin</note>
    </ligand>
    <ligandPart>
        <name>Fe</name>
        <dbReference type="ChEBI" id="CHEBI:18248"/>
    </ligandPart>
</feature>
<feature type="binding site" evidence="2">
    <location>
        <position position="443"/>
    </location>
    <ligand>
        <name>Ca(2+)</name>
        <dbReference type="ChEBI" id="CHEBI:29108"/>
    </ligand>
</feature>
<feature type="cross-link" description="1'-histidyl-3'-tyrosine (His-Tyr)" evidence="2">
    <location>
        <begin position="243"/>
        <end position="247"/>
    </location>
</feature>
<name>COX1_ORYSJ</name>
<comment type="function">
    <text evidence="2">Component of the cytochrome c oxidase, the last enzyme in the mitochondrial electron transport chain which drives oxidative phosphorylation. The respiratory chain contains 3 multisubunit complexes succinate dehydrogenase (complex II, CII), ubiquinol-cytochrome c oxidoreductase (cytochrome b-c1 complex, complex III, CIII) and cytochrome c oxidase (complex IV, CIV), that cooperate to transfer electrons derived from NADH and succinate to molecular oxygen, creating an electrochemical gradient over the inner membrane that drives transmembrane transport and the ATP synthase. Cytochrome c oxidase is the component of the respiratory chain that catalyzes the reduction of oxygen to water. Electrons originating from reduced cytochrome c in the intermembrane space (IMS) are transferred via the dinuclear copper A center (CU(A)) of subunit 2 and heme A of subunit 1 to the active site in subunit 1, a binuclear center (BNC) formed by heme A3 and copper B (CU(B)). The BNC reduces molecular oxygen to 2 water molecules using 4 electrons from cytochrome c in the IMS and 4 protons from the mitochondrial matrix.</text>
</comment>
<comment type="catalytic activity">
    <reaction evidence="2">
        <text>4 Fe(II)-[cytochrome c] + O2 + 8 H(+)(in) = 4 Fe(III)-[cytochrome c] + 2 H2O + 4 H(+)(out)</text>
        <dbReference type="Rhea" id="RHEA:11436"/>
        <dbReference type="Rhea" id="RHEA-COMP:10350"/>
        <dbReference type="Rhea" id="RHEA-COMP:14399"/>
        <dbReference type="ChEBI" id="CHEBI:15377"/>
        <dbReference type="ChEBI" id="CHEBI:15378"/>
        <dbReference type="ChEBI" id="CHEBI:15379"/>
        <dbReference type="ChEBI" id="CHEBI:29033"/>
        <dbReference type="ChEBI" id="CHEBI:29034"/>
        <dbReference type="EC" id="7.1.1.9"/>
    </reaction>
    <physiologicalReaction direction="left-to-right" evidence="2">
        <dbReference type="Rhea" id="RHEA:11437"/>
    </physiologicalReaction>
</comment>
<comment type="cofactor">
    <cofactor evidence="2">
        <name>heme</name>
        <dbReference type="ChEBI" id="CHEBI:30413"/>
    </cofactor>
    <text evidence="2">Binds 2 heme A groups non-covalently per subunit.</text>
</comment>
<comment type="cofactor">
    <cofactor evidence="2">
        <name>Cu cation</name>
        <dbReference type="ChEBI" id="CHEBI:23378"/>
    </cofactor>
    <text evidence="2">Binds a copper B center.</text>
</comment>
<comment type="pathway">
    <text evidence="2">Energy metabolism; oxidative phosphorylation.</text>
</comment>
<comment type="subunit">
    <text evidence="2">Component of the cytochrome c oxidase (complex IV, CIV), a multisubunit enzyme composed of a catalytic core of 3 subunits and several supernumerary subunits. The complex exists as a monomer or a dimer and forms supercomplexes (SCs) in the inner mitochondrial membrane with ubiquinol-cytochrome c oxidoreductase (cytochrome b-c1 complex, complex III, CIII).</text>
</comment>
<comment type="subcellular location">
    <subcellularLocation>
        <location evidence="2">Mitochondrion inner membrane</location>
        <topology evidence="2">Multi-pass membrane protein</topology>
    </subcellularLocation>
</comment>
<comment type="similarity">
    <text evidence="4">Belongs to the heme-copper respiratory oxidase family.</text>
</comment>
<accession>P14578</accession>
<proteinExistence type="inferred from homology"/>
<geneLocation type="mitochondrion"/>
<dbReference type="EC" id="7.1.1.9"/>
<dbReference type="EMBL" id="X15990">
    <property type="protein sequence ID" value="CAA34122.1"/>
    <property type="molecule type" value="Genomic_DNA"/>
</dbReference>
<dbReference type="EMBL" id="BA000029">
    <property type="status" value="NOT_ANNOTATED_CDS"/>
    <property type="molecule type" value="Genomic_DNA"/>
</dbReference>
<dbReference type="EMBL" id="M57903">
    <property type="protein sequence ID" value="AAA70312.1"/>
    <property type="molecule type" value="Genomic_DNA"/>
</dbReference>
<dbReference type="PIR" id="S06761">
    <property type="entry name" value="ODRZ1"/>
</dbReference>
<dbReference type="RefSeq" id="YP_002000592.1">
    <property type="nucleotide sequence ID" value="NC_011033.1"/>
</dbReference>
<dbReference type="SMR" id="P14578"/>
<dbReference type="FunCoup" id="P14578">
    <property type="interactions" value="42"/>
</dbReference>
<dbReference type="STRING" id="39947.P14578"/>
<dbReference type="PaxDb" id="39947-P14578"/>
<dbReference type="GeneID" id="6450122"/>
<dbReference type="KEGG" id="osa:6450122"/>
<dbReference type="InParanoid" id="P14578"/>
<dbReference type="OrthoDB" id="728657at2759"/>
<dbReference type="UniPathway" id="UPA00705"/>
<dbReference type="Proteomes" id="UP000059680">
    <property type="component" value="Mitochondrion"/>
</dbReference>
<dbReference type="GO" id="GO:0005743">
    <property type="term" value="C:mitochondrial inner membrane"/>
    <property type="evidence" value="ECO:0007669"/>
    <property type="project" value="UniProtKB-SubCell"/>
</dbReference>
<dbReference type="GO" id="GO:0005739">
    <property type="term" value="C:mitochondrion"/>
    <property type="evidence" value="ECO:0000250"/>
    <property type="project" value="Gramene"/>
</dbReference>
<dbReference type="GO" id="GO:0045277">
    <property type="term" value="C:respiratory chain complex IV"/>
    <property type="evidence" value="ECO:0000318"/>
    <property type="project" value="GO_Central"/>
</dbReference>
<dbReference type="GO" id="GO:0004129">
    <property type="term" value="F:cytochrome-c oxidase activity"/>
    <property type="evidence" value="ECO:0007669"/>
    <property type="project" value="UniProtKB-EC"/>
</dbReference>
<dbReference type="GO" id="GO:0020037">
    <property type="term" value="F:heme binding"/>
    <property type="evidence" value="ECO:0007669"/>
    <property type="project" value="InterPro"/>
</dbReference>
<dbReference type="GO" id="GO:0046872">
    <property type="term" value="F:metal ion binding"/>
    <property type="evidence" value="ECO:0007669"/>
    <property type="project" value="UniProtKB-KW"/>
</dbReference>
<dbReference type="GO" id="GO:0009060">
    <property type="term" value="P:aerobic respiration"/>
    <property type="evidence" value="ECO:0000318"/>
    <property type="project" value="GO_Central"/>
</dbReference>
<dbReference type="GO" id="GO:0015990">
    <property type="term" value="P:electron transport coupled proton transport"/>
    <property type="evidence" value="ECO:0007669"/>
    <property type="project" value="InterPro"/>
</dbReference>
<dbReference type="GO" id="GO:0006119">
    <property type="term" value="P:oxidative phosphorylation"/>
    <property type="evidence" value="ECO:0007669"/>
    <property type="project" value="UniProtKB-UniPathway"/>
</dbReference>
<dbReference type="GO" id="GO:0022904">
    <property type="term" value="P:respiratory electron transport chain"/>
    <property type="evidence" value="ECO:0000318"/>
    <property type="project" value="GO_Central"/>
</dbReference>
<dbReference type="CDD" id="cd01663">
    <property type="entry name" value="Cyt_c_Oxidase_I"/>
    <property type="match status" value="1"/>
</dbReference>
<dbReference type="FunFam" id="1.20.210.10:FF:000001">
    <property type="entry name" value="Cytochrome c oxidase subunit 1"/>
    <property type="match status" value="1"/>
</dbReference>
<dbReference type="Gene3D" id="1.20.210.10">
    <property type="entry name" value="Cytochrome c oxidase-like, subunit I domain"/>
    <property type="match status" value="1"/>
</dbReference>
<dbReference type="InterPro" id="IPR023616">
    <property type="entry name" value="Cyt_c_oxase-like_su1_dom"/>
</dbReference>
<dbReference type="InterPro" id="IPR036927">
    <property type="entry name" value="Cyt_c_oxase-like_su1_sf"/>
</dbReference>
<dbReference type="InterPro" id="IPR000883">
    <property type="entry name" value="Cyt_C_Oxase_1"/>
</dbReference>
<dbReference type="InterPro" id="IPR023615">
    <property type="entry name" value="Cyt_c_Oxase_su1_BS"/>
</dbReference>
<dbReference type="InterPro" id="IPR033944">
    <property type="entry name" value="Cyt_c_oxase_su1_dom"/>
</dbReference>
<dbReference type="InterPro" id="IPR014241">
    <property type="entry name" value="Cyt_c_oxidase_su1_bac"/>
</dbReference>
<dbReference type="NCBIfam" id="TIGR02891">
    <property type="entry name" value="CtaD_CoxA"/>
    <property type="match status" value="1"/>
</dbReference>
<dbReference type="PANTHER" id="PTHR10422">
    <property type="entry name" value="CYTOCHROME C OXIDASE SUBUNIT 1"/>
    <property type="match status" value="1"/>
</dbReference>
<dbReference type="PANTHER" id="PTHR10422:SF18">
    <property type="entry name" value="CYTOCHROME C OXIDASE SUBUNIT 1"/>
    <property type="match status" value="1"/>
</dbReference>
<dbReference type="Pfam" id="PF00115">
    <property type="entry name" value="COX1"/>
    <property type="match status" value="1"/>
</dbReference>
<dbReference type="PRINTS" id="PR01165">
    <property type="entry name" value="CYCOXIDASEI"/>
</dbReference>
<dbReference type="SUPFAM" id="SSF81442">
    <property type="entry name" value="Cytochrome c oxidase subunit I-like"/>
    <property type="match status" value="1"/>
</dbReference>
<dbReference type="PROSITE" id="PS50855">
    <property type="entry name" value="COX1"/>
    <property type="match status" value="1"/>
</dbReference>
<dbReference type="PROSITE" id="PS00077">
    <property type="entry name" value="COX1_CUB"/>
    <property type="match status" value="1"/>
</dbReference>
<keyword id="KW-0106">Calcium</keyword>
<keyword id="KW-0186">Copper</keyword>
<keyword id="KW-0249">Electron transport</keyword>
<keyword id="KW-0349">Heme</keyword>
<keyword id="KW-0408">Iron</keyword>
<keyword id="KW-0460">Magnesium</keyword>
<keyword id="KW-0472">Membrane</keyword>
<keyword id="KW-0479">Metal-binding</keyword>
<keyword id="KW-0496">Mitochondrion</keyword>
<keyword id="KW-0999">Mitochondrion inner membrane</keyword>
<keyword id="KW-1185">Reference proteome</keyword>
<keyword id="KW-0679">Respiratory chain</keyword>
<keyword id="KW-1278">Translocase</keyword>
<keyword id="KW-0812">Transmembrane</keyword>
<keyword id="KW-1133">Transmembrane helix</keyword>
<keyword id="KW-0813">Transport</keyword>
<organism>
    <name type="scientific">Oryza sativa subsp. japonica</name>
    <name type="common">Rice</name>
    <dbReference type="NCBI Taxonomy" id="39947"/>
    <lineage>
        <taxon>Eukaryota</taxon>
        <taxon>Viridiplantae</taxon>
        <taxon>Streptophyta</taxon>
        <taxon>Embryophyta</taxon>
        <taxon>Tracheophyta</taxon>
        <taxon>Spermatophyta</taxon>
        <taxon>Magnoliopsida</taxon>
        <taxon>Liliopsida</taxon>
        <taxon>Poales</taxon>
        <taxon>Poaceae</taxon>
        <taxon>BOP clade</taxon>
        <taxon>Oryzoideae</taxon>
        <taxon>Oryzeae</taxon>
        <taxon>Oryzinae</taxon>
        <taxon>Oryza</taxon>
        <taxon>Oryza sativa</taxon>
    </lineage>
</organism>
<sequence>MTNLVRWLFSTNHKDIGTLYFIFGAIAGVMGTCFSVLIRMELARPGDQILGGNHQLYNVLITAHAFLMIFFMVMPAMIGGFGNWFVPILIGAPDMAFPRLNNISFWLLPPSLLLLLSSALVEVGSGTGWTVYPPLSGITSHSGGAVDLAIFSLHLSGVSSILGSINFITTIFNMRGPGMTMHRLPLFVWSVLVTAFLLLLSLPVLAGAITMLLTDRNFNTTFFDPAGGGDPILYQHLFWFFGHPEVYILILPGFGIISHIVSTFSRKPVFGYLGMVYAMISIGVLGFLVWAHHMFTVGLDVDTRAYFTAATMIIAVPTGIKIFSWIATMWGGSIQYKTPMLFAVGFIFLFTIGGLTGIVLANSGLDIALHDTYYVVAHFHYVLSMGAVFALFAGFYYWVGKIFGRTYPETLGQIHFWITFFGVNLTFFPMHFLGLSGMPRRIPDYPDAYAGWNALSSFGSYISVVGIRRFFVVVAITSSSGKNKRCAESPWAVEQNPTTLEWLVQSPPAFHTFGELPAIKETKS</sequence>
<protein>
    <recommendedName>
        <fullName>Cytochrome c oxidase subunit 1</fullName>
        <ecNumber>7.1.1.9</ecNumber>
    </recommendedName>
    <alternativeName>
        <fullName>Cytochrome c oxidase polypeptide I</fullName>
    </alternativeName>
</protein>
<gene>
    <name type="primary">COX1</name>
    <name type="synonym">COXI</name>
</gene>